<accession>C0ZW45</accession>
<feature type="chain" id="PRO_1000214714" description="Large ribosomal subunit protein uL15">
    <location>
        <begin position="1"/>
        <end position="147"/>
    </location>
</feature>
<feature type="region of interest" description="Disordered" evidence="2">
    <location>
        <begin position="1"/>
        <end position="42"/>
    </location>
</feature>
<proteinExistence type="inferred from homology"/>
<dbReference type="EMBL" id="AP008957">
    <property type="protein sequence ID" value="BAH32580.1"/>
    <property type="molecule type" value="Genomic_DNA"/>
</dbReference>
<dbReference type="RefSeq" id="WP_019747555.1">
    <property type="nucleotide sequence ID" value="NC_012490.1"/>
</dbReference>
<dbReference type="SMR" id="C0ZW45"/>
<dbReference type="GeneID" id="57487990"/>
<dbReference type="KEGG" id="rer:RER_18720"/>
<dbReference type="eggNOG" id="COG0200">
    <property type="taxonomic scope" value="Bacteria"/>
</dbReference>
<dbReference type="HOGENOM" id="CLU_055188_4_1_11"/>
<dbReference type="Proteomes" id="UP000002204">
    <property type="component" value="Chromosome"/>
</dbReference>
<dbReference type="GO" id="GO:0022625">
    <property type="term" value="C:cytosolic large ribosomal subunit"/>
    <property type="evidence" value="ECO:0007669"/>
    <property type="project" value="TreeGrafter"/>
</dbReference>
<dbReference type="GO" id="GO:0019843">
    <property type="term" value="F:rRNA binding"/>
    <property type="evidence" value="ECO:0007669"/>
    <property type="project" value="UniProtKB-UniRule"/>
</dbReference>
<dbReference type="GO" id="GO:0003735">
    <property type="term" value="F:structural constituent of ribosome"/>
    <property type="evidence" value="ECO:0007669"/>
    <property type="project" value="InterPro"/>
</dbReference>
<dbReference type="GO" id="GO:0006412">
    <property type="term" value="P:translation"/>
    <property type="evidence" value="ECO:0007669"/>
    <property type="project" value="UniProtKB-UniRule"/>
</dbReference>
<dbReference type="FunFam" id="3.100.10.10:FF:000005">
    <property type="entry name" value="50S ribosomal protein L15"/>
    <property type="match status" value="1"/>
</dbReference>
<dbReference type="Gene3D" id="3.100.10.10">
    <property type="match status" value="1"/>
</dbReference>
<dbReference type="HAMAP" id="MF_01341">
    <property type="entry name" value="Ribosomal_uL15"/>
    <property type="match status" value="1"/>
</dbReference>
<dbReference type="InterPro" id="IPR030878">
    <property type="entry name" value="Ribosomal_uL15"/>
</dbReference>
<dbReference type="InterPro" id="IPR021131">
    <property type="entry name" value="Ribosomal_uL15/eL18"/>
</dbReference>
<dbReference type="InterPro" id="IPR036227">
    <property type="entry name" value="Ribosomal_uL15/eL18_sf"/>
</dbReference>
<dbReference type="InterPro" id="IPR005749">
    <property type="entry name" value="Ribosomal_uL15_bac-type"/>
</dbReference>
<dbReference type="InterPro" id="IPR001196">
    <property type="entry name" value="Ribosomal_uL15_CS"/>
</dbReference>
<dbReference type="NCBIfam" id="TIGR01071">
    <property type="entry name" value="rplO_bact"/>
    <property type="match status" value="1"/>
</dbReference>
<dbReference type="PANTHER" id="PTHR12934">
    <property type="entry name" value="50S RIBOSOMAL PROTEIN L15"/>
    <property type="match status" value="1"/>
</dbReference>
<dbReference type="PANTHER" id="PTHR12934:SF11">
    <property type="entry name" value="LARGE RIBOSOMAL SUBUNIT PROTEIN UL15M"/>
    <property type="match status" value="1"/>
</dbReference>
<dbReference type="Pfam" id="PF00828">
    <property type="entry name" value="Ribosomal_L27A"/>
    <property type="match status" value="1"/>
</dbReference>
<dbReference type="SUPFAM" id="SSF52080">
    <property type="entry name" value="Ribosomal proteins L15p and L18e"/>
    <property type="match status" value="1"/>
</dbReference>
<dbReference type="PROSITE" id="PS00475">
    <property type="entry name" value="RIBOSOMAL_L15"/>
    <property type="match status" value="1"/>
</dbReference>
<keyword id="KW-0687">Ribonucleoprotein</keyword>
<keyword id="KW-0689">Ribosomal protein</keyword>
<keyword id="KW-0694">RNA-binding</keyword>
<keyword id="KW-0699">rRNA-binding</keyword>
<gene>
    <name evidence="1" type="primary">rplO</name>
    <name type="ordered locus">RER_18720</name>
</gene>
<sequence length="147" mass="15560">MTIKLHHLRPAPGSKSNKIRVGRGEGGKRGKTAGRGTKGTKARNTVRVGFEGGQMPLHMRLPKLKGFTNPFRTEYQVVNVGDIARLFPEGGAITVEDLVAKGAVRKNQLVKVLGDGELTVAVQVTVDKFTGSAKEKIAAAGGSATEL</sequence>
<name>RL15_RHOE4</name>
<protein>
    <recommendedName>
        <fullName evidence="1">Large ribosomal subunit protein uL15</fullName>
    </recommendedName>
    <alternativeName>
        <fullName evidence="3">50S ribosomal protein L15</fullName>
    </alternativeName>
</protein>
<organism>
    <name type="scientific">Rhodococcus erythropolis (strain PR4 / NBRC 100887)</name>
    <dbReference type="NCBI Taxonomy" id="234621"/>
    <lineage>
        <taxon>Bacteria</taxon>
        <taxon>Bacillati</taxon>
        <taxon>Actinomycetota</taxon>
        <taxon>Actinomycetes</taxon>
        <taxon>Mycobacteriales</taxon>
        <taxon>Nocardiaceae</taxon>
        <taxon>Rhodococcus</taxon>
        <taxon>Rhodococcus erythropolis group</taxon>
    </lineage>
</organism>
<evidence type="ECO:0000255" key="1">
    <source>
        <dbReference type="HAMAP-Rule" id="MF_01341"/>
    </source>
</evidence>
<evidence type="ECO:0000256" key="2">
    <source>
        <dbReference type="SAM" id="MobiDB-lite"/>
    </source>
</evidence>
<evidence type="ECO:0000305" key="3"/>
<comment type="function">
    <text evidence="1">Binds to the 23S rRNA.</text>
</comment>
<comment type="subunit">
    <text evidence="1">Part of the 50S ribosomal subunit.</text>
</comment>
<comment type="similarity">
    <text evidence="1">Belongs to the universal ribosomal protein uL15 family.</text>
</comment>
<reference key="1">
    <citation type="submission" date="2005-03" db="EMBL/GenBank/DDBJ databases">
        <title>Comparison of the complete genome sequences of Rhodococcus erythropolis PR4 and Rhodococcus opacus B4.</title>
        <authorList>
            <person name="Takarada H."/>
            <person name="Sekine M."/>
            <person name="Hosoyama A."/>
            <person name="Yamada R."/>
            <person name="Fujisawa T."/>
            <person name="Omata S."/>
            <person name="Shimizu A."/>
            <person name="Tsukatani N."/>
            <person name="Tanikawa S."/>
            <person name="Fujita N."/>
            <person name="Harayama S."/>
        </authorList>
    </citation>
    <scope>NUCLEOTIDE SEQUENCE [LARGE SCALE GENOMIC DNA]</scope>
    <source>
        <strain>PR4 / NBRC 100887</strain>
    </source>
</reference>